<comment type="alternative products">
    <event type="alternative splicing"/>
    <isoform>
        <id>Q9NXS3-1</id>
        <name>1</name>
        <sequence type="displayed"/>
    </isoform>
    <isoform>
        <id>Q9NXS3-2</id>
        <name>2</name>
        <sequence type="described" ref="VSP_009800"/>
    </isoform>
</comment>
<proteinExistence type="evidence at protein level"/>
<feature type="chain" id="PRO_0000119064" description="Kelch-like protein 28">
    <location>
        <begin position="1"/>
        <end position="571"/>
    </location>
</feature>
<feature type="domain" description="BTB" evidence="1">
    <location>
        <begin position="35"/>
        <end position="102"/>
    </location>
</feature>
<feature type="repeat" description="Kelch 1">
    <location>
        <begin position="284"/>
        <end position="331"/>
    </location>
</feature>
<feature type="repeat" description="Kelch 2">
    <location>
        <begin position="332"/>
        <end position="386"/>
    </location>
</feature>
<feature type="repeat" description="Kelch 3">
    <location>
        <begin position="387"/>
        <end position="433"/>
    </location>
</feature>
<feature type="repeat" description="Kelch 4">
    <location>
        <begin position="435"/>
        <end position="479"/>
    </location>
</feature>
<feature type="repeat" description="Kelch 5">
    <location>
        <begin position="480"/>
        <end position="526"/>
    </location>
</feature>
<feature type="repeat" description="Kelch 6">
    <location>
        <begin position="528"/>
        <end position="570"/>
    </location>
</feature>
<feature type="splice variant" id="VSP_009800" description="In isoform 2." evidence="2">
    <location>
        <begin position="301"/>
        <end position="571"/>
    </location>
</feature>
<feature type="sequence variant" id="VAR_061339" description="In dbSNP:rs35728857.">
    <original>I</original>
    <variation>V</variation>
    <location>
        <position position="349"/>
    </location>
</feature>
<feature type="sequence conflict" description="In Ref. 1; BAA90937." evidence="3" ref="1">
    <original>L</original>
    <variation>P</variation>
    <location>
        <position position="10"/>
    </location>
</feature>
<feature type="sequence conflict" description="In Ref. 1; BAA90937." evidence="3" ref="1">
    <original>I</original>
    <variation>F</variation>
    <location>
        <position position="89"/>
    </location>
</feature>
<feature type="sequence conflict" description="In Ref. 1; BAA90937." evidence="3" ref="1">
    <original>S</original>
    <variation>R</variation>
    <location>
        <position position="300"/>
    </location>
</feature>
<accession>Q9NXS3</accession>
<accession>Q0VAL5</accession>
<keyword id="KW-0025">Alternative splicing</keyword>
<keyword id="KW-0880">Kelch repeat</keyword>
<keyword id="KW-1267">Proteomics identification</keyword>
<keyword id="KW-1185">Reference proteome</keyword>
<keyword id="KW-0677">Repeat</keyword>
<sequence length="571" mass="64192">MDHTSPTYMLANLTHLHSEQLLQGLNLLRQHHELCDIILRVGDVKIHAHKVVLASVSPYFKAMFTGNLSEKENSEVEFQCIDETALQAIVEYAYTGTVFISQDTVESLLPAANLLQIKLVLKECCAFLESQLDPGNCIGISRFAETYGCRDLYLAATKYICQNFEAVCQTEEFFELTHADLDEIVSNDCLNVATEETVFYALESWIKYDVQERQKYLAQLLNSVRLPLLSVKFLTRLYEANHLIRDDRTCKHLLNEALKYHFMPEHRLSHQTVLMTRPRCAPKVLCAVGGKSGLFACLDSVEMYFPQNDSWIGLAPLNIPRYEFGICVLDQKVYVIGGIATNVRPGVTIRKHENSVECWNPDTNTWTSLERMNESRSTLGVVVLAGELYALGGYDGQSYLQSVEKYIPKIRKWQPVAPMTTTRSCFAAAVLDGMIYAIGGYGPAHMNSVERYDPSKDSWEMVASMADKRIHFGVGVMLGFIFVVGGHNGVSHLSSIERYDPHQNQWTVCRPMKEPRTGVGAAVIDNYLYVVGGHSGSSYLNTVQKYDPISDTWLDSAGMIYCRCNFGLTAL</sequence>
<gene>
    <name type="primary">KLHL28</name>
    <name type="synonym">BTBD5</name>
</gene>
<reference key="1">
    <citation type="journal article" date="2004" name="Nat. Genet.">
        <title>Complete sequencing and characterization of 21,243 full-length human cDNAs.</title>
        <authorList>
            <person name="Ota T."/>
            <person name="Suzuki Y."/>
            <person name="Nishikawa T."/>
            <person name="Otsuki T."/>
            <person name="Sugiyama T."/>
            <person name="Irie R."/>
            <person name="Wakamatsu A."/>
            <person name="Hayashi K."/>
            <person name="Sato H."/>
            <person name="Nagai K."/>
            <person name="Kimura K."/>
            <person name="Makita H."/>
            <person name="Sekine M."/>
            <person name="Obayashi M."/>
            <person name="Nishi T."/>
            <person name="Shibahara T."/>
            <person name="Tanaka T."/>
            <person name="Ishii S."/>
            <person name="Yamamoto J."/>
            <person name="Saito K."/>
            <person name="Kawai Y."/>
            <person name="Isono Y."/>
            <person name="Nakamura Y."/>
            <person name="Nagahari K."/>
            <person name="Murakami K."/>
            <person name="Yasuda T."/>
            <person name="Iwayanagi T."/>
            <person name="Wagatsuma M."/>
            <person name="Shiratori A."/>
            <person name="Sudo H."/>
            <person name="Hosoiri T."/>
            <person name="Kaku Y."/>
            <person name="Kodaira H."/>
            <person name="Kondo H."/>
            <person name="Sugawara M."/>
            <person name="Takahashi M."/>
            <person name="Kanda K."/>
            <person name="Yokoi T."/>
            <person name="Furuya T."/>
            <person name="Kikkawa E."/>
            <person name="Omura Y."/>
            <person name="Abe K."/>
            <person name="Kamihara K."/>
            <person name="Katsuta N."/>
            <person name="Sato K."/>
            <person name="Tanikawa M."/>
            <person name="Yamazaki M."/>
            <person name="Ninomiya K."/>
            <person name="Ishibashi T."/>
            <person name="Yamashita H."/>
            <person name="Murakawa K."/>
            <person name="Fujimori K."/>
            <person name="Tanai H."/>
            <person name="Kimata M."/>
            <person name="Watanabe M."/>
            <person name="Hiraoka S."/>
            <person name="Chiba Y."/>
            <person name="Ishida S."/>
            <person name="Ono Y."/>
            <person name="Takiguchi S."/>
            <person name="Watanabe S."/>
            <person name="Yosida M."/>
            <person name="Hotuta T."/>
            <person name="Kusano J."/>
            <person name="Kanehori K."/>
            <person name="Takahashi-Fujii A."/>
            <person name="Hara H."/>
            <person name="Tanase T.-O."/>
            <person name="Nomura Y."/>
            <person name="Togiya S."/>
            <person name="Komai F."/>
            <person name="Hara R."/>
            <person name="Takeuchi K."/>
            <person name="Arita M."/>
            <person name="Imose N."/>
            <person name="Musashino K."/>
            <person name="Yuuki H."/>
            <person name="Oshima A."/>
            <person name="Sasaki N."/>
            <person name="Aotsuka S."/>
            <person name="Yoshikawa Y."/>
            <person name="Matsunawa H."/>
            <person name="Ichihara T."/>
            <person name="Shiohata N."/>
            <person name="Sano S."/>
            <person name="Moriya S."/>
            <person name="Momiyama H."/>
            <person name="Satoh N."/>
            <person name="Takami S."/>
            <person name="Terashima Y."/>
            <person name="Suzuki O."/>
            <person name="Nakagawa S."/>
            <person name="Senoh A."/>
            <person name="Mizoguchi H."/>
            <person name="Goto Y."/>
            <person name="Shimizu F."/>
            <person name="Wakebe H."/>
            <person name="Hishigaki H."/>
            <person name="Watanabe T."/>
            <person name="Sugiyama A."/>
            <person name="Takemoto M."/>
            <person name="Kawakami B."/>
            <person name="Yamazaki M."/>
            <person name="Watanabe K."/>
            <person name="Kumagai A."/>
            <person name="Itakura S."/>
            <person name="Fukuzumi Y."/>
            <person name="Fujimori Y."/>
            <person name="Komiyama M."/>
            <person name="Tashiro H."/>
            <person name="Tanigami A."/>
            <person name="Fujiwara T."/>
            <person name="Ono T."/>
            <person name="Yamada K."/>
            <person name="Fujii Y."/>
            <person name="Ozaki K."/>
            <person name="Hirao M."/>
            <person name="Ohmori Y."/>
            <person name="Kawabata A."/>
            <person name="Hikiji T."/>
            <person name="Kobatake N."/>
            <person name="Inagaki H."/>
            <person name="Ikema Y."/>
            <person name="Okamoto S."/>
            <person name="Okitani R."/>
            <person name="Kawakami T."/>
            <person name="Noguchi S."/>
            <person name="Itoh T."/>
            <person name="Shigeta K."/>
            <person name="Senba T."/>
            <person name="Matsumura K."/>
            <person name="Nakajima Y."/>
            <person name="Mizuno T."/>
            <person name="Morinaga M."/>
            <person name="Sasaki M."/>
            <person name="Togashi T."/>
            <person name="Oyama M."/>
            <person name="Hata H."/>
            <person name="Watanabe M."/>
            <person name="Komatsu T."/>
            <person name="Mizushima-Sugano J."/>
            <person name="Satoh T."/>
            <person name="Shirai Y."/>
            <person name="Takahashi Y."/>
            <person name="Nakagawa K."/>
            <person name="Okumura K."/>
            <person name="Nagase T."/>
            <person name="Nomura N."/>
            <person name="Kikuchi H."/>
            <person name="Masuho Y."/>
            <person name="Yamashita R."/>
            <person name="Nakai K."/>
            <person name="Yada T."/>
            <person name="Nakamura Y."/>
            <person name="Ohara O."/>
            <person name="Isogai T."/>
            <person name="Sugano S."/>
        </authorList>
    </citation>
    <scope>NUCLEOTIDE SEQUENCE [LARGE SCALE MRNA] (ISOFORM 2)</scope>
    <source>
        <tissue>Colon</tissue>
    </source>
</reference>
<reference key="2">
    <citation type="journal article" date="2004" name="Genome Res.">
        <title>The status, quality, and expansion of the NIH full-length cDNA project: the Mammalian Gene Collection (MGC).</title>
        <authorList>
            <consortium name="The MGC Project Team"/>
        </authorList>
    </citation>
    <scope>NUCLEOTIDE SEQUENCE [LARGE SCALE MRNA] (ISOFORM 1)</scope>
    <source>
        <tissue>Testis</tissue>
    </source>
</reference>
<name>KLH28_HUMAN</name>
<organism>
    <name type="scientific">Homo sapiens</name>
    <name type="common">Human</name>
    <dbReference type="NCBI Taxonomy" id="9606"/>
    <lineage>
        <taxon>Eukaryota</taxon>
        <taxon>Metazoa</taxon>
        <taxon>Chordata</taxon>
        <taxon>Craniata</taxon>
        <taxon>Vertebrata</taxon>
        <taxon>Euteleostomi</taxon>
        <taxon>Mammalia</taxon>
        <taxon>Eutheria</taxon>
        <taxon>Euarchontoglires</taxon>
        <taxon>Primates</taxon>
        <taxon>Haplorrhini</taxon>
        <taxon>Catarrhini</taxon>
        <taxon>Hominidae</taxon>
        <taxon>Homo</taxon>
    </lineage>
</organism>
<evidence type="ECO:0000255" key="1">
    <source>
        <dbReference type="PROSITE-ProRule" id="PRU00037"/>
    </source>
</evidence>
<evidence type="ECO:0000303" key="2">
    <source>
    </source>
</evidence>
<evidence type="ECO:0000305" key="3"/>
<dbReference type="EMBL" id="AK000088">
    <property type="protein sequence ID" value="BAA90937.1"/>
    <property type="molecule type" value="mRNA"/>
</dbReference>
<dbReference type="EMBL" id="BC121009">
    <property type="protein sequence ID" value="AAI21010.1"/>
    <property type="molecule type" value="mRNA"/>
</dbReference>
<dbReference type="EMBL" id="BC121010">
    <property type="protein sequence ID" value="AAI21011.1"/>
    <property type="molecule type" value="mRNA"/>
</dbReference>
<dbReference type="CCDS" id="CCDS9680.1">
    <molecule id="Q9NXS3-1"/>
</dbReference>
<dbReference type="RefSeq" id="NP_060128.2">
    <molecule id="Q9NXS3-1"/>
    <property type="nucleotide sequence ID" value="NM_017658.4"/>
</dbReference>
<dbReference type="RefSeq" id="XP_005267827.1">
    <molecule id="Q9NXS3-1"/>
    <property type="nucleotide sequence ID" value="XM_005267770.5"/>
</dbReference>
<dbReference type="RefSeq" id="XP_011535149.1">
    <molecule id="Q9NXS3-1"/>
    <property type="nucleotide sequence ID" value="XM_011536847.4"/>
</dbReference>
<dbReference type="RefSeq" id="XP_047287447.1">
    <molecule id="Q9NXS3-1"/>
    <property type="nucleotide sequence ID" value="XM_047431491.1"/>
</dbReference>
<dbReference type="RefSeq" id="XP_054232213.1">
    <molecule id="Q9NXS3-1"/>
    <property type="nucleotide sequence ID" value="XM_054376238.1"/>
</dbReference>
<dbReference type="RefSeq" id="XP_054232214.1">
    <molecule id="Q9NXS3-1"/>
    <property type="nucleotide sequence ID" value="XM_054376239.1"/>
</dbReference>
<dbReference type="RefSeq" id="XP_054232215.1">
    <molecule id="Q9NXS3-1"/>
    <property type="nucleotide sequence ID" value="XM_054376240.1"/>
</dbReference>
<dbReference type="SMR" id="Q9NXS3"/>
<dbReference type="BioGRID" id="120170">
    <property type="interactions" value="30"/>
</dbReference>
<dbReference type="ComplexPortal" id="CPX-8135">
    <property type="entry name" value="CRL3 E3 ubiquitin ligase complex, KLHL28 variant"/>
</dbReference>
<dbReference type="FunCoup" id="Q9NXS3">
    <property type="interactions" value="1482"/>
</dbReference>
<dbReference type="IntAct" id="Q9NXS3">
    <property type="interactions" value="22"/>
</dbReference>
<dbReference type="MINT" id="Q9NXS3"/>
<dbReference type="STRING" id="9606.ENSP00000347193"/>
<dbReference type="iPTMnet" id="Q9NXS3"/>
<dbReference type="PhosphoSitePlus" id="Q9NXS3"/>
<dbReference type="BioMuta" id="KLHL28"/>
<dbReference type="DMDM" id="48474985"/>
<dbReference type="MassIVE" id="Q9NXS3"/>
<dbReference type="PaxDb" id="9606-ENSP00000379434"/>
<dbReference type="PeptideAtlas" id="Q9NXS3"/>
<dbReference type="ProteomicsDB" id="83132">
    <molecule id="Q9NXS3-1"/>
</dbReference>
<dbReference type="ProteomicsDB" id="83133">
    <molecule id="Q9NXS3-2"/>
</dbReference>
<dbReference type="Antibodypedia" id="10174">
    <property type="antibodies" value="149 antibodies from 21 providers"/>
</dbReference>
<dbReference type="DNASU" id="54813"/>
<dbReference type="Ensembl" id="ENST00000396128.9">
    <molecule id="Q9NXS3-1"/>
    <property type="protein sequence ID" value="ENSP00000379434.4"/>
    <property type="gene ID" value="ENSG00000179454.14"/>
</dbReference>
<dbReference type="GeneID" id="54813"/>
<dbReference type="KEGG" id="hsa:54813"/>
<dbReference type="MANE-Select" id="ENST00000396128.9">
    <property type="protein sequence ID" value="ENSP00000379434.4"/>
    <property type="RefSeq nucleotide sequence ID" value="NM_017658.5"/>
    <property type="RefSeq protein sequence ID" value="NP_060128.2"/>
</dbReference>
<dbReference type="UCSC" id="uc001wvr.4">
    <molecule id="Q9NXS3-1"/>
    <property type="organism name" value="human"/>
</dbReference>
<dbReference type="AGR" id="HGNC:19741"/>
<dbReference type="CTD" id="54813"/>
<dbReference type="DisGeNET" id="54813"/>
<dbReference type="GeneCards" id="KLHL28"/>
<dbReference type="HGNC" id="HGNC:19741">
    <property type="gene designation" value="KLHL28"/>
</dbReference>
<dbReference type="HPA" id="ENSG00000179454">
    <property type="expression patterns" value="Tissue enhanced (bone)"/>
</dbReference>
<dbReference type="neXtProt" id="NX_Q9NXS3"/>
<dbReference type="OpenTargets" id="ENSG00000179454"/>
<dbReference type="PharmGKB" id="PA162393472"/>
<dbReference type="VEuPathDB" id="HostDB:ENSG00000179454"/>
<dbReference type="eggNOG" id="KOG4441">
    <property type="taxonomic scope" value="Eukaryota"/>
</dbReference>
<dbReference type="GeneTree" id="ENSGT00940000158586"/>
<dbReference type="HOGENOM" id="CLU_004253_14_2_1"/>
<dbReference type="InParanoid" id="Q9NXS3"/>
<dbReference type="OrthoDB" id="45365at2759"/>
<dbReference type="PAN-GO" id="Q9NXS3">
    <property type="GO annotations" value="0 GO annotations based on evolutionary models"/>
</dbReference>
<dbReference type="PhylomeDB" id="Q9NXS3"/>
<dbReference type="TreeFam" id="TF329218"/>
<dbReference type="PathwayCommons" id="Q9NXS3"/>
<dbReference type="SignaLink" id="Q9NXS3"/>
<dbReference type="BioGRID-ORCS" id="54813">
    <property type="hits" value="10 hits in 1190 CRISPR screens"/>
</dbReference>
<dbReference type="ChiTaRS" id="KLHL28">
    <property type="organism name" value="human"/>
</dbReference>
<dbReference type="GenomeRNAi" id="54813"/>
<dbReference type="Pharos" id="Q9NXS3">
    <property type="development level" value="Tdark"/>
</dbReference>
<dbReference type="PRO" id="PR:Q9NXS3"/>
<dbReference type="Proteomes" id="UP000005640">
    <property type="component" value="Chromosome 14"/>
</dbReference>
<dbReference type="RNAct" id="Q9NXS3">
    <property type="molecule type" value="protein"/>
</dbReference>
<dbReference type="Bgee" id="ENSG00000179454">
    <property type="expression patterns" value="Expressed in secondary oocyte and 192 other cell types or tissues"/>
</dbReference>
<dbReference type="ExpressionAtlas" id="Q9NXS3">
    <property type="expression patterns" value="baseline and differential"/>
</dbReference>
<dbReference type="GO" id="GO:0031463">
    <property type="term" value="C:Cul3-RING ubiquitin ligase complex"/>
    <property type="evidence" value="ECO:0000318"/>
    <property type="project" value="GO_Central"/>
</dbReference>
<dbReference type="GO" id="GO:0005737">
    <property type="term" value="C:cytoplasm"/>
    <property type="evidence" value="ECO:0000318"/>
    <property type="project" value="GO_Central"/>
</dbReference>
<dbReference type="GO" id="GO:1990756">
    <property type="term" value="F:ubiquitin-like ligase-substrate adaptor activity"/>
    <property type="evidence" value="ECO:0000318"/>
    <property type="project" value="GO_Central"/>
</dbReference>
<dbReference type="GO" id="GO:0043161">
    <property type="term" value="P:proteasome-mediated ubiquitin-dependent protein catabolic process"/>
    <property type="evidence" value="ECO:0000318"/>
    <property type="project" value="GO_Central"/>
</dbReference>
<dbReference type="CDD" id="cd18467">
    <property type="entry name" value="BACK_KLHL28_BTBD5"/>
    <property type="match status" value="1"/>
</dbReference>
<dbReference type="CDD" id="cd18257">
    <property type="entry name" value="BTB_POZ_KLHL28_BTBD5"/>
    <property type="match status" value="1"/>
</dbReference>
<dbReference type="FunFam" id="1.25.40.420:FF:000001">
    <property type="entry name" value="Kelch-like family member 12"/>
    <property type="match status" value="1"/>
</dbReference>
<dbReference type="FunFam" id="3.30.710.10:FF:000001">
    <property type="entry name" value="Kelch-like family member 20"/>
    <property type="match status" value="1"/>
</dbReference>
<dbReference type="Gene3D" id="1.25.40.420">
    <property type="match status" value="1"/>
</dbReference>
<dbReference type="Gene3D" id="2.120.10.80">
    <property type="entry name" value="Kelch-type beta propeller"/>
    <property type="match status" value="2"/>
</dbReference>
<dbReference type="Gene3D" id="3.30.710.10">
    <property type="entry name" value="Potassium Channel Kv1.1, Chain A"/>
    <property type="match status" value="1"/>
</dbReference>
<dbReference type="InterPro" id="IPR011705">
    <property type="entry name" value="BACK"/>
</dbReference>
<dbReference type="InterPro" id="IPR017096">
    <property type="entry name" value="BTB-kelch_protein"/>
</dbReference>
<dbReference type="InterPro" id="IPR000210">
    <property type="entry name" value="BTB/POZ_dom"/>
</dbReference>
<dbReference type="InterPro" id="IPR011043">
    <property type="entry name" value="Gal_Oxase/kelch_b-propeller"/>
</dbReference>
<dbReference type="InterPro" id="IPR015915">
    <property type="entry name" value="Kelch-typ_b-propeller"/>
</dbReference>
<dbReference type="InterPro" id="IPR006652">
    <property type="entry name" value="Kelch_1"/>
</dbReference>
<dbReference type="InterPro" id="IPR011333">
    <property type="entry name" value="SKP1/BTB/POZ_sf"/>
</dbReference>
<dbReference type="PANTHER" id="PTHR24412">
    <property type="entry name" value="KELCH PROTEIN"/>
    <property type="match status" value="1"/>
</dbReference>
<dbReference type="PANTHER" id="PTHR24412:SF441">
    <property type="entry name" value="KELCH-LIKE PROTEIN 28"/>
    <property type="match status" value="1"/>
</dbReference>
<dbReference type="Pfam" id="PF07707">
    <property type="entry name" value="BACK"/>
    <property type="match status" value="1"/>
</dbReference>
<dbReference type="Pfam" id="PF00651">
    <property type="entry name" value="BTB"/>
    <property type="match status" value="1"/>
</dbReference>
<dbReference type="Pfam" id="PF24681">
    <property type="entry name" value="Kelch_KLHDC2_KLHL20_DRC7"/>
    <property type="match status" value="1"/>
</dbReference>
<dbReference type="PIRSF" id="PIRSF037037">
    <property type="entry name" value="Kelch-like_protein_gigaxonin"/>
    <property type="match status" value="1"/>
</dbReference>
<dbReference type="SMART" id="SM00875">
    <property type="entry name" value="BACK"/>
    <property type="match status" value="1"/>
</dbReference>
<dbReference type="SMART" id="SM00225">
    <property type="entry name" value="BTB"/>
    <property type="match status" value="1"/>
</dbReference>
<dbReference type="SMART" id="SM00612">
    <property type="entry name" value="Kelch"/>
    <property type="match status" value="6"/>
</dbReference>
<dbReference type="SUPFAM" id="SSF50965">
    <property type="entry name" value="Galactose oxidase, central domain"/>
    <property type="match status" value="2"/>
</dbReference>
<dbReference type="SUPFAM" id="SSF54695">
    <property type="entry name" value="POZ domain"/>
    <property type="match status" value="1"/>
</dbReference>
<dbReference type="PROSITE" id="PS50097">
    <property type="entry name" value="BTB"/>
    <property type="match status" value="1"/>
</dbReference>
<protein>
    <recommendedName>
        <fullName>Kelch-like protein 28</fullName>
    </recommendedName>
    <alternativeName>
        <fullName>BTB/POZ domain-containing protein 5</fullName>
    </alternativeName>
</protein>